<comment type="function">
    <text evidence="4">Small GTPase-like component of the intraflagellar transport (IFT) complex B. Forms a subcomplex within the IFT complex B with IFT25. Has very low GTPase activity either because it lacks the conserved catalytic Gln in position 79 or because it requires some GTPase-activating protein (GAP) for GTP turnover.</text>
</comment>
<comment type="subunit">
    <text evidence="2 3 4">Component of the IFT complex B, the core composed of IFT25, IFT27, IFT46, IFT52, IFT74, IFT81 and IFT88 as well as associated subunits IFT20, IFT57, IFT80 and IFT172. Interacts with IFT25; the interaction is direct.</text>
</comment>
<comment type="interaction">
    <interactant intactId="EBI-8629375">
        <id>A8HN58</id>
    </interactant>
    <interactant intactId="EBI-8629367">
        <id>B8LIX8</id>
        <label>IFT25</label>
    </interactant>
    <organismsDiffer>false</organismsDiffer>
    <experiments>3</experiments>
</comment>
<comment type="subcellular location">
    <subcellularLocation>
        <location evidence="2">Cell projection</location>
        <location evidence="2">Cilium</location>
        <location evidence="2">Flagellum</location>
    </subcellularLocation>
    <subcellularLocation>
        <location evidence="2">Cytoplasm</location>
        <location evidence="2">Cytoskeleton</location>
        <location evidence="2">Flagellum basal body</location>
    </subcellularLocation>
    <text>Colocalizes with IFT25 at the distal-most portion of basal bodies, probably the transition zones, and concentrates in the basal body region.</text>
</comment>
<comment type="similarity">
    <text evidence="5">Belongs to the small GTPase superfamily. Rab family.</text>
</comment>
<comment type="caution">
    <text evidence="6">Although similar to the small GTPase superfamily, lacks the conserved catalytic Gln in position 79 which is replaced by a Ser residue, possibly explaining the weak GTPase activity. In contrast to other members of the family, it is not prenylated (PubMed:21505417).</text>
</comment>
<accession>A8HN58</accession>
<protein>
    <recommendedName>
        <fullName>Intraflagellar transport protein 27</fullName>
    </recommendedName>
    <alternativeName>
        <fullName>Flagellar-associated protein 156</fullName>
    </alternativeName>
</protein>
<organism>
    <name type="scientific">Chlamydomonas reinhardtii</name>
    <name type="common">Chlamydomonas smithii</name>
    <dbReference type="NCBI Taxonomy" id="3055"/>
    <lineage>
        <taxon>Eukaryota</taxon>
        <taxon>Viridiplantae</taxon>
        <taxon>Chlorophyta</taxon>
        <taxon>core chlorophytes</taxon>
        <taxon>Chlorophyceae</taxon>
        <taxon>CS clade</taxon>
        <taxon>Chlamydomonadales</taxon>
        <taxon>Chlamydomonadaceae</taxon>
        <taxon>Chlamydomonas</taxon>
    </lineage>
</organism>
<keyword id="KW-0002">3D-structure</keyword>
<keyword id="KW-0966">Cell projection</keyword>
<keyword id="KW-0969">Cilium</keyword>
<keyword id="KW-0963">Cytoplasm</keyword>
<keyword id="KW-0206">Cytoskeleton</keyword>
<keyword id="KW-0282">Flagellum</keyword>
<keyword id="KW-0342">GTP-binding</keyword>
<keyword id="KW-0547">Nucleotide-binding</keyword>
<dbReference type="EMBL" id="DS496108">
    <property type="protein sequence ID" value="EDP09483.1"/>
    <property type="molecule type" value="Genomic_DNA"/>
</dbReference>
<dbReference type="RefSeq" id="XP_001689745.1">
    <property type="nucleotide sequence ID" value="XM_001689693.1"/>
</dbReference>
<dbReference type="PDB" id="2YC2">
    <property type="method" value="X-ray"/>
    <property type="resolution" value="2.59 A"/>
    <property type="chains" value="C/D=1-204"/>
</dbReference>
<dbReference type="PDB" id="2YC4">
    <property type="method" value="X-ray"/>
    <property type="resolution" value="2.80 A"/>
    <property type="chains" value="C/D=1-204"/>
</dbReference>
<dbReference type="PDB" id="8RUY">
    <property type="method" value="EM"/>
    <property type="resolution" value="15.40 A"/>
    <property type="chains" value="Q=1-204"/>
</dbReference>
<dbReference type="PDBsum" id="2YC2"/>
<dbReference type="PDBsum" id="2YC4"/>
<dbReference type="PDBsum" id="8RUY"/>
<dbReference type="EMDB" id="EMD-19515"/>
<dbReference type="SMR" id="A8HN58"/>
<dbReference type="IntAct" id="A8HN58">
    <property type="interactions" value="1"/>
</dbReference>
<dbReference type="MINT" id="A8HN58"/>
<dbReference type="PaxDb" id="3055-EDP09483"/>
<dbReference type="EnsemblPlants" id="PNW88859">
    <property type="protein sequence ID" value="PNW88859"/>
    <property type="gene ID" value="CHLRE_01g047950v5"/>
</dbReference>
<dbReference type="GeneID" id="5715694"/>
<dbReference type="Gramene" id="PNW88859">
    <property type="protein sequence ID" value="PNW88859"/>
    <property type="gene ID" value="CHLRE_01g047950v5"/>
</dbReference>
<dbReference type="KEGG" id="cre:CHLRE_01g047950v5"/>
<dbReference type="eggNOG" id="KOG0079">
    <property type="taxonomic scope" value="Eukaryota"/>
</dbReference>
<dbReference type="HOGENOM" id="CLU_041217_10_6_1"/>
<dbReference type="OMA" id="KMWGQPS"/>
<dbReference type="OrthoDB" id="265044at2759"/>
<dbReference type="EvolutionaryTrace" id="A8HN58"/>
<dbReference type="GO" id="GO:0005737">
    <property type="term" value="C:cytoplasm"/>
    <property type="evidence" value="ECO:0007669"/>
    <property type="project" value="UniProtKB-KW"/>
</dbReference>
<dbReference type="GO" id="GO:0005856">
    <property type="term" value="C:cytoskeleton"/>
    <property type="evidence" value="ECO:0007669"/>
    <property type="project" value="UniProtKB-KW"/>
</dbReference>
<dbReference type="GO" id="GO:0030992">
    <property type="term" value="C:intraciliary transport particle B"/>
    <property type="evidence" value="ECO:0000314"/>
    <property type="project" value="UniProtKB"/>
</dbReference>
<dbReference type="GO" id="GO:0031514">
    <property type="term" value="C:motile cilium"/>
    <property type="evidence" value="ECO:0000314"/>
    <property type="project" value="BHF-UCL"/>
</dbReference>
<dbReference type="GO" id="GO:0005525">
    <property type="term" value="F:GTP binding"/>
    <property type="evidence" value="ECO:0007669"/>
    <property type="project" value="UniProtKB-KW"/>
</dbReference>
<dbReference type="GO" id="GO:0003924">
    <property type="term" value="F:GTPase activity"/>
    <property type="evidence" value="ECO:0007669"/>
    <property type="project" value="InterPro"/>
</dbReference>
<dbReference type="FunFam" id="3.40.50.300:FF:001684">
    <property type="entry name" value="Intraflagellar transport 27 homolog (Chlamydomonas)"/>
    <property type="match status" value="1"/>
</dbReference>
<dbReference type="Gene3D" id="3.40.50.300">
    <property type="entry name" value="P-loop containing nucleotide triphosphate hydrolases"/>
    <property type="match status" value="1"/>
</dbReference>
<dbReference type="InterPro" id="IPR027417">
    <property type="entry name" value="P-loop_NTPase"/>
</dbReference>
<dbReference type="InterPro" id="IPR005225">
    <property type="entry name" value="Small_GTP-bd"/>
</dbReference>
<dbReference type="InterPro" id="IPR001806">
    <property type="entry name" value="Small_GTPase"/>
</dbReference>
<dbReference type="NCBIfam" id="TIGR00231">
    <property type="entry name" value="small_GTP"/>
    <property type="match status" value="1"/>
</dbReference>
<dbReference type="PANTHER" id="PTHR47978">
    <property type="match status" value="1"/>
</dbReference>
<dbReference type="Pfam" id="PF00071">
    <property type="entry name" value="Ras"/>
    <property type="match status" value="1"/>
</dbReference>
<dbReference type="PRINTS" id="PR00449">
    <property type="entry name" value="RASTRNSFRMNG"/>
</dbReference>
<dbReference type="SMART" id="SM00175">
    <property type="entry name" value="RAB"/>
    <property type="match status" value="1"/>
</dbReference>
<dbReference type="SMART" id="SM00173">
    <property type="entry name" value="RAS"/>
    <property type="match status" value="1"/>
</dbReference>
<dbReference type="SMART" id="SM00174">
    <property type="entry name" value="RHO"/>
    <property type="match status" value="1"/>
</dbReference>
<dbReference type="SUPFAM" id="SSF52540">
    <property type="entry name" value="P-loop containing nucleoside triphosphate hydrolases"/>
    <property type="match status" value="1"/>
</dbReference>
<dbReference type="PROSITE" id="PS51419">
    <property type="entry name" value="RAB"/>
    <property type="match status" value="1"/>
</dbReference>
<evidence type="ECO:0000250" key="1"/>
<evidence type="ECO:0000269" key="2">
    <source>
    </source>
</evidence>
<evidence type="ECO:0000269" key="3">
    <source>
    </source>
</evidence>
<evidence type="ECO:0000269" key="4">
    <source>
    </source>
</evidence>
<evidence type="ECO:0000305" key="5"/>
<evidence type="ECO:0000305" key="6">
    <source>
    </source>
</evidence>
<evidence type="ECO:0007829" key="7">
    <source>
        <dbReference type="PDB" id="2YC2"/>
    </source>
</evidence>
<evidence type="ECO:0007829" key="8">
    <source>
        <dbReference type="PDB" id="2YC4"/>
    </source>
</evidence>
<name>IFT27_CHLRE</name>
<reference key="1">
    <citation type="journal article" date="2007" name="Science">
        <title>The Chlamydomonas genome reveals the evolution of key animal and plant functions.</title>
        <authorList>
            <person name="Merchant S.S."/>
            <person name="Prochnik S.E."/>
            <person name="Vallon O."/>
            <person name="Harris E.H."/>
            <person name="Karpowicz S.J."/>
            <person name="Witman G.B."/>
            <person name="Terry A."/>
            <person name="Salamov A."/>
            <person name="Fritz-Laylin L.K."/>
            <person name="Marechal-Drouard L."/>
            <person name="Marshall W.F."/>
            <person name="Qu L.H."/>
            <person name="Nelson D.R."/>
            <person name="Sanderfoot A.A."/>
            <person name="Spalding M.H."/>
            <person name="Kapitonov V.V."/>
            <person name="Ren Q."/>
            <person name="Ferris P."/>
            <person name="Lindquist E."/>
            <person name="Shapiro H."/>
            <person name="Lucas S.M."/>
            <person name="Grimwood J."/>
            <person name="Schmutz J."/>
            <person name="Cardol P."/>
            <person name="Cerutti H."/>
            <person name="Chanfreau G."/>
            <person name="Chen C.L."/>
            <person name="Cognat V."/>
            <person name="Croft M.T."/>
            <person name="Dent R."/>
            <person name="Dutcher S."/>
            <person name="Fernandez E."/>
            <person name="Fukuzawa H."/>
            <person name="Gonzalez-Ballester D."/>
            <person name="Gonzalez-Halphen D."/>
            <person name="Hallmann A."/>
            <person name="Hanikenne M."/>
            <person name="Hippler M."/>
            <person name="Inwood W."/>
            <person name="Jabbari K."/>
            <person name="Kalanon M."/>
            <person name="Kuras R."/>
            <person name="Lefebvre P.A."/>
            <person name="Lemaire S.D."/>
            <person name="Lobanov A.V."/>
            <person name="Lohr M."/>
            <person name="Manuell A."/>
            <person name="Meier I."/>
            <person name="Mets L."/>
            <person name="Mittag M."/>
            <person name="Mittelmeier T."/>
            <person name="Moroney J.V."/>
            <person name="Moseley J."/>
            <person name="Napoli C."/>
            <person name="Nedelcu A.M."/>
            <person name="Niyogi K."/>
            <person name="Novoselov S.V."/>
            <person name="Paulsen I.T."/>
            <person name="Pazour G.J."/>
            <person name="Purton S."/>
            <person name="Ral J.P."/>
            <person name="Riano-Pachon D.M."/>
            <person name="Riekhof W."/>
            <person name="Rymarquis L."/>
            <person name="Schroda M."/>
            <person name="Stern D."/>
            <person name="Umen J."/>
            <person name="Willows R."/>
            <person name="Wilson N."/>
            <person name="Zimmer S.L."/>
            <person name="Allmer J."/>
            <person name="Balk J."/>
            <person name="Bisova K."/>
            <person name="Chen C.J."/>
            <person name="Elias M."/>
            <person name="Gendler K."/>
            <person name="Hauser C."/>
            <person name="Lamb M.R."/>
            <person name="Ledford H."/>
            <person name="Long J.C."/>
            <person name="Minagawa J."/>
            <person name="Page M.D."/>
            <person name="Pan J."/>
            <person name="Pootakham W."/>
            <person name="Roje S."/>
            <person name="Rose A."/>
            <person name="Stahlberg E."/>
            <person name="Terauchi A.M."/>
            <person name="Yang P."/>
            <person name="Ball S."/>
            <person name="Bowler C."/>
            <person name="Dieckmann C.L."/>
            <person name="Gladyshev V.N."/>
            <person name="Green P."/>
            <person name="Jorgensen R."/>
            <person name="Mayfield S."/>
            <person name="Mueller-Roeber B."/>
            <person name="Rajamani S."/>
            <person name="Sayre R.T."/>
            <person name="Brokstein P."/>
            <person name="Dubchak I."/>
            <person name="Goodstein D."/>
            <person name="Hornick L."/>
            <person name="Huang Y.W."/>
            <person name="Jhaveri J."/>
            <person name="Luo Y."/>
            <person name="Martinez D."/>
            <person name="Ngau W.C."/>
            <person name="Otillar B."/>
            <person name="Poliakov A."/>
            <person name="Porter A."/>
            <person name="Szajkowski L."/>
            <person name="Werner G."/>
            <person name="Zhou K."/>
            <person name="Grigoriev I.V."/>
            <person name="Rokhsar D.S."/>
            <person name="Grossman A.R."/>
        </authorList>
    </citation>
    <scope>NUCLEOTIDE SEQUENCE [LARGE SCALE GENOMIC DNA]</scope>
    <source>
        <strain>CC-503</strain>
    </source>
</reference>
<reference key="2">
    <citation type="journal article" date="2007" name="Curr. Biol.">
        <title>Intraflagellar transport protein 27 is a small G protein involved in cell-cycle control.</title>
        <authorList>
            <person name="Qin H."/>
            <person name="Wang Z."/>
            <person name="Diener D."/>
            <person name="Rosenbaum J."/>
        </authorList>
    </citation>
    <scope>IDENTIFICATION IN THE IFT COMPLEX B</scope>
    <scope>SUBCELLULAR LOCATION</scope>
</reference>
<reference key="3">
    <citation type="journal article" date="2009" name="PLoS ONE">
        <title>Intraflagellar transport (IFT) protein IFT25 is a phosphoprotein component of IFT complex B and physically interacts with IFT27 in Chlamydomonas.</title>
        <authorList>
            <person name="Wang Z."/>
            <person name="Fan Z.C."/>
            <person name="Williamson S.M."/>
            <person name="Qin H."/>
        </authorList>
    </citation>
    <scope>INTERACTION WITH IFT25</scope>
</reference>
<reference key="4">
    <citation type="journal article" date="2011" name="EMBO J.">
        <title>Crystal structure of the intraflagellar transport complex 25/27.</title>
        <authorList>
            <person name="Bhogaraju S."/>
            <person name="Taschner M."/>
            <person name="Morawetz M."/>
            <person name="Basquin C."/>
            <person name="Lorentzen E."/>
        </authorList>
    </citation>
    <scope>X-RAY CRYSTALLOGRAPHY (2.59 ANGSTROMS) IN COMPLEX WITH IFT27</scope>
    <scope>GTP-BINDING</scope>
    <scope>FUNCTION</scope>
    <scope>MUTAGENESIS OF SER-30; SER-79 AND VAL-194</scope>
</reference>
<sequence length="204" mass="22760">MVKKEVKPIDITATLRCKVAVVGEATVGKSALISMFTSKGSKFLKDYAMTSGVEVVVAPVTIPDTTVSVELFLLDTAGSDLYKEQISQYWNGVYYAILVFDVSSMESFESCKAWFELLKSARPDRERPLRAVLVANKTDLPPQRHQVRLDMAQDWATTNTLDFFDVSANPPGKDADAPFLSIATTFYRNYEDKVAAFQDACRNY</sequence>
<gene>
    <name type="primary">IFT27</name>
    <name type="synonym">FAP156</name>
    <name type="ORF">CHLREDRAFT_129193</name>
</gene>
<proteinExistence type="evidence at protein level"/>
<feature type="chain" id="PRO_0000424812" description="Intraflagellar transport protein 27">
    <location>
        <begin position="1"/>
        <end position="204"/>
    </location>
</feature>
<feature type="binding site" evidence="1">
    <location>
        <begin position="23"/>
        <end position="30"/>
    </location>
    <ligand>
        <name>GTP</name>
        <dbReference type="ChEBI" id="CHEBI:37565"/>
    </ligand>
</feature>
<feature type="binding site" evidence="1">
    <location>
        <begin position="75"/>
        <end position="79"/>
    </location>
    <ligand>
        <name>GTP</name>
        <dbReference type="ChEBI" id="CHEBI:37565"/>
    </ligand>
</feature>
<feature type="binding site" evidence="1">
    <location>
        <begin position="136"/>
        <end position="139"/>
    </location>
    <ligand>
        <name>GTP</name>
        <dbReference type="ChEBI" id="CHEBI:37565"/>
    </ligand>
</feature>
<feature type="mutagenesis site" description="Impaired GTP-binding." evidence="4">
    <original>S</original>
    <variation>N</variation>
    <location>
        <position position="30"/>
    </location>
</feature>
<feature type="mutagenesis site" description="Shows higher GTPase activity." evidence="4">
    <original>S</original>
    <variation>Q</variation>
    <location>
        <position position="79"/>
    </location>
</feature>
<feature type="mutagenesis site" description="Does not affect interaction with IFT25." evidence="4">
    <original>V</original>
    <variation>R</variation>
    <location>
        <position position="194"/>
    </location>
</feature>
<feature type="helix" evidence="7">
    <location>
        <begin position="8"/>
        <end position="10"/>
    </location>
</feature>
<feature type="strand" evidence="7">
    <location>
        <begin position="12"/>
        <end position="21"/>
    </location>
</feature>
<feature type="helix" evidence="8">
    <location>
        <begin position="25"/>
        <end position="27"/>
    </location>
</feature>
<feature type="helix" evidence="8">
    <location>
        <begin position="29"/>
        <end position="37"/>
    </location>
</feature>
<feature type="strand" evidence="7">
    <location>
        <begin position="58"/>
        <end position="61"/>
    </location>
</feature>
<feature type="strand" evidence="7">
    <location>
        <begin position="65"/>
        <end position="75"/>
    </location>
</feature>
<feature type="turn" evidence="7">
    <location>
        <begin position="76"/>
        <end position="79"/>
    </location>
</feature>
<feature type="helix" evidence="7">
    <location>
        <begin position="80"/>
        <end position="86"/>
    </location>
</feature>
<feature type="strand" evidence="7">
    <location>
        <begin position="95"/>
        <end position="101"/>
    </location>
</feature>
<feature type="helix" evidence="7">
    <location>
        <begin position="105"/>
        <end position="121"/>
    </location>
</feature>
<feature type="strand" evidence="7">
    <location>
        <begin position="130"/>
        <end position="136"/>
    </location>
</feature>
<feature type="helix" evidence="7">
    <location>
        <begin position="149"/>
        <end position="158"/>
    </location>
</feature>
<feature type="strand" evidence="7">
    <location>
        <begin position="162"/>
        <end position="165"/>
    </location>
</feature>
<feature type="helix" evidence="7">
    <location>
        <begin position="177"/>
        <end position="200"/>
    </location>
</feature>